<proteinExistence type="inferred from homology"/>
<evidence type="ECO:0000255" key="1">
    <source>
        <dbReference type="HAMAP-Rule" id="MF_01813"/>
    </source>
</evidence>
<evidence type="ECO:0000256" key="2">
    <source>
        <dbReference type="SAM" id="MobiDB-lite"/>
    </source>
</evidence>
<feature type="chain" id="PRO_0000193312" description="Ubiquinone/menaquinone biosynthesis C-methyltransferase UbiE">
    <location>
        <begin position="1"/>
        <end position="256"/>
    </location>
</feature>
<feature type="region of interest" description="Disordered" evidence="2">
    <location>
        <begin position="1"/>
        <end position="22"/>
    </location>
</feature>
<feature type="compositionally biased region" description="Basic and acidic residues" evidence="2">
    <location>
        <begin position="1"/>
        <end position="12"/>
    </location>
</feature>
<feature type="binding site" evidence="1">
    <location>
        <position position="79"/>
    </location>
    <ligand>
        <name>S-adenosyl-L-methionine</name>
        <dbReference type="ChEBI" id="CHEBI:59789"/>
    </ligand>
</feature>
<feature type="binding site" evidence="1">
    <location>
        <position position="100"/>
    </location>
    <ligand>
        <name>S-adenosyl-L-methionine</name>
        <dbReference type="ChEBI" id="CHEBI:59789"/>
    </ligand>
</feature>
<feature type="binding site" evidence="1">
    <location>
        <begin position="128"/>
        <end position="129"/>
    </location>
    <ligand>
        <name>S-adenosyl-L-methionine</name>
        <dbReference type="ChEBI" id="CHEBI:59789"/>
    </ligand>
</feature>
<protein>
    <recommendedName>
        <fullName evidence="1">Ubiquinone/menaquinone biosynthesis C-methyltransferase UbiE</fullName>
        <ecNumber evidence="1">2.1.1.163</ecNumber>
        <ecNumber evidence="1">2.1.1.201</ecNumber>
    </recommendedName>
    <alternativeName>
        <fullName evidence="1">2-methoxy-6-polyprenyl-1,4-benzoquinol methylase</fullName>
    </alternativeName>
    <alternativeName>
        <fullName evidence="1">Demethylmenaquinone methyltransferase</fullName>
    </alternativeName>
</protein>
<comment type="function">
    <text evidence="1">Methyltransferase required for the conversion of demethylmenaquinol (DMKH2) to menaquinol (MKH2) and the conversion of 2-polyprenyl-6-methoxy-1,4-benzoquinol (DDMQH2) to 2-polyprenyl-3-methyl-6-methoxy-1,4-benzoquinol (DMQH2).</text>
</comment>
<comment type="catalytic activity">
    <reaction evidence="1">
        <text>a 2-demethylmenaquinol + S-adenosyl-L-methionine = a menaquinol + S-adenosyl-L-homocysteine + H(+)</text>
        <dbReference type="Rhea" id="RHEA:42640"/>
        <dbReference type="Rhea" id="RHEA-COMP:9539"/>
        <dbReference type="Rhea" id="RHEA-COMP:9563"/>
        <dbReference type="ChEBI" id="CHEBI:15378"/>
        <dbReference type="ChEBI" id="CHEBI:18151"/>
        <dbReference type="ChEBI" id="CHEBI:55437"/>
        <dbReference type="ChEBI" id="CHEBI:57856"/>
        <dbReference type="ChEBI" id="CHEBI:59789"/>
        <dbReference type="EC" id="2.1.1.163"/>
    </reaction>
</comment>
<comment type="catalytic activity">
    <reaction evidence="1">
        <text>a 2-methoxy-6-(all-trans-polyprenyl)benzene-1,4-diol + S-adenosyl-L-methionine = a 5-methoxy-2-methyl-3-(all-trans-polyprenyl)benzene-1,4-diol + S-adenosyl-L-homocysteine + H(+)</text>
        <dbReference type="Rhea" id="RHEA:28286"/>
        <dbReference type="Rhea" id="RHEA-COMP:10858"/>
        <dbReference type="Rhea" id="RHEA-COMP:10859"/>
        <dbReference type="ChEBI" id="CHEBI:15378"/>
        <dbReference type="ChEBI" id="CHEBI:57856"/>
        <dbReference type="ChEBI" id="CHEBI:59789"/>
        <dbReference type="ChEBI" id="CHEBI:84166"/>
        <dbReference type="ChEBI" id="CHEBI:84167"/>
        <dbReference type="EC" id="2.1.1.201"/>
    </reaction>
</comment>
<comment type="pathway">
    <text evidence="1">Quinol/quinone metabolism; menaquinone biosynthesis; menaquinol from 1,4-dihydroxy-2-naphthoate: step 2/2.</text>
</comment>
<comment type="pathway">
    <text evidence="1">Cofactor biosynthesis; ubiquinone biosynthesis.</text>
</comment>
<comment type="similarity">
    <text evidence="1">Belongs to the class I-like SAM-binding methyltransferase superfamily. MenG/UbiE family.</text>
</comment>
<name>UBIE_PSEPU</name>
<dbReference type="EC" id="2.1.1.163" evidence="1"/>
<dbReference type="EC" id="2.1.1.201" evidence="1"/>
<dbReference type="EMBL" id="AF042276">
    <property type="protein sequence ID" value="AAD02212.1"/>
    <property type="molecule type" value="Genomic_DNA"/>
</dbReference>
<dbReference type="RefSeq" id="WP_013974541.1">
    <property type="nucleotide sequence ID" value="NZ_RJAI01000080.1"/>
</dbReference>
<dbReference type="SMR" id="Q9Z439"/>
<dbReference type="GeneID" id="97170372"/>
<dbReference type="eggNOG" id="COG2226">
    <property type="taxonomic scope" value="Bacteria"/>
</dbReference>
<dbReference type="OrthoDB" id="9808140at2"/>
<dbReference type="UniPathway" id="UPA00079">
    <property type="reaction ID" value="UER00169"/>
</dbReference>
<dbReference type="UniPathway" id="UPA00232"/>
<dbReference type="GO" id="GO:0008425">
    <property type="term" value="F:2-methoxy-6-polyprenyl-1,4-benzoquinol methyltransferase activity"/>
    <property type="evidence" value="ECO:0007669"/>
    <property type="project" value="UniProtKB-UniRule"/>
</dbReference>
<dbReference type="GO" id="GO:0043770">
    <property type="term" value="F:demethylmenaquinone methyltransferase activity"/>
    <property type="evidence" value="ECO:0007669"/>
    <property type="project" value="UniProtKB-UniRule"/>
</dbReference>
<dbReference type="GO" id="GO:0009060">
    <property type="term" value="P:aerobic respiration"/>
    <property type="evidence" value="ECO:0007669"/>
    <property type="project" value="UniProtKB-UniRule"/>
</dbReference>
<dbReference type="GO" id="GO:0009234">
    <property type="term" value="P:menaquinone biosynthetic process"/>
    <property type="evidence" value="ECO:0007669"/>
    <property type="project" value="UniProtKB-UniRule"/>
</dbReference>
<dbReference type="GO" id="GO:0032259">
    <property type="term" value="P:methylation"/>
    <property type="evidence" value="ECO:0007669"/>
    <property type="project" value="UniProtKB-KW"/>
</dbReference>
<dbReference type="CDD" id="cd02440">
    <property type="entry name" value="AdoMet_MTases"/>
    <property type="match status" value="1"/>
</dbReference>
<dbReference type="FunFam" id="3.40.50.150:FF:000014">
    <property type="entry name" value="Ubiquinone/menaquinone biosynthesis C-methyltransferase UbiE"/>
    <property type="match status" value="1"/>
</dbReference>
<dbReference type="Gene3D" id="3.40.50.150">
    <property type="entry name" value="Vaccinia Virus protein VP39"/>
    <property type="match status" value="1"/>
</dbReference>
<dbReference type="HAMAP" id="MF_01813">
    <property type="entry name" value="MenG_UbiE_methyltr"/>
    <property type="match status" value="1"/>
</dbReference>
<dbReference type="InterPro" id="IPR029063">
    <property type="entry name" value="SAM-dependent_MTases_sf"/>
</dbReference>
<dbReference type="InterPro" id="IPR004033">
    <property type="entry name" value="UbiE/COQ5_MeTrFase"/>
</dbReference>
<dbReference type="InterPro" id="IPR023576">
    <property type="entry name" value="UbiE/COQ5_MeTrFase_CS"/>
</dbReference>
<dbReference type="NCBIfam" id="TIGR01934">
    <property type="entry name" value="MenG_MenH_UbiE"/>
    <property type="match status" value="1"/>
</dbReference>
<dbReference type="NCBIfam" id="NF001240">
    <property type="entry name" value="PRK00216.1-1"/>
    <property type="match status" value="1"/>
</dbReference>
<dbReference type="NCBIfam" id="NF001244">
    <property type="entry name" value="PRK00216.1-5"/>
    <property type="match status" value="1"/>
</dbReference>
<dbReference type="PANTHER" id="PTHR43591:SF24">
    <property type="entry name" value="2-METHOXY-6-POLYPRENYL-1,4-BENZOQUINOL METHYLASE, MITOCHONDRIAL"/>
    <property type="match status" value="1"/>
</dbReference>
<dbReference type="PANTHER" id="PTHR43591">
    <property type="entry name" value="METHYLTRANSFERASE"/>
    <property type="match status" value="1"/>
</dbReference>
<dbReference type="Pfam" id="PF01209">
    <property type="entry name" value="Ubie_methyltran"/>
    <property type="match status" value="1"/>
</dbReference>
<dbReference type="SUPFAM" id="SSF53335">
    <property type="entry name" value="S-adenosyl-L-methionine-dependent methyltransferases"/>
    <property type="match status" value="1"/>
</dbReference>
<dbReference type="PROSITE" id="PS51608">
    <property type="entry name" value="SAM_MT_UBIE"/>
    <property type="match status" value="1"/>
</dbReference>
<dbReference type="PROSITE" id="PS01183">
    <property type="entry name" value="UBIE_1"/>
    <property type="match status" value="1"/>
</dbReference>
<dbReference type="PROSITE" id="PS01184">
    <property type="entry name" value="UBIE_2"/>
    <property type="match status" value="1"/>
</dbReference>
<sequence length="256" mass="28440">MNDQRKGDHAEPTTHFGYQDVPESQKAKKVAEVFHSVAAKYDLMNDVLSGGMHRLWKRFTIELSGVRAGNRVLDIAGGTGDLAAKFSRLVGPTGQVVLADINESMLKVGRDRLLDRGVAGNIEFVQADAEKLPFPDNHFDCVTIAFGLRNVTHKDEAIRSMLRVLKPGGRLLVLEFSKPTNKLMSKAYDAYSFAFMPLAGKLITNDSESYRYLAESIRMHPDQETLKAMMVEAGFDRVTYHNMTSGIVAVHRGIKP</sequence>
<organism>
    <name type="scientific">Pseudomonas putida</name>
    <name type="common">Arthrobacter siderocapsulatus</name>
    <dbReference type="NCBI Taxonomy" id="303"/>
    <lineage>
        <taxon>Bacteria</taxon>
        <taxon>Pseudomonadati</taxon>
        <taxon>Pseudomonadota</taxon>
        <taxon>Gammaproteobacteria</taxon>
        <taxon>Pseudomonadales</taxon>
        <taxon>Pseudomonadaceae</taxon>
        <taxon>Pseudomonas</taxon>
    </lineage>
</organism>
<keyword id="KW-0474">Menaquinone biosynthesis</keyword>
<keyword id="KW-0489">Methyltransferase</keyword>
<keyword id="KW-0949">S-adenosyl-L-methionine</keyword>
<keyword id="KW-0808">Transferase</keyword>
<keyword id="KW-0831">Ubiquinone biosynthesis</keyword>
<gene>
    <name evidence="1" type="primary">ubiE</name>
</gene>
<reference key="1">
    <citation type="journal article" date="1998" name="J. Biotechnol.">
        <title>Investigation of the function of proteins associated to polyhydroxyalkanoate inclusions in Pseudomonas putida BMO1.</title>
        <authorList>
            <person name="Valentin H.E."/>
            <person name="Stuart E.S."/>
            <person name="Fuller R.C."/>
            <person name="Lenz R.W."/>
            <person name="Dennis D."/>
        </authorList>
    </citation>
    <scope>NUCLEOTIDE SEQUENCE [GENOMIC DNA]</scope>
    <source>
        <strain>BMO1</strain>
    </source>
</reference>
<accession>Q9Z439</accession>